<proteinExistence type="evidence at protein level"/>
<comment type="function">
    <text evidence="3 4 5 6 7 8 9 10 11">Essential for the control of the cell cycle at the G1/S (start) transition (PubMed:12606285). In association with cdk-2, regulates proliferation, quiescent state and cell fate during the development of several cell lineages (PubMed:10952902, PubMed:17476329, PubMed:21455289, PubMed:21558371). In the embryo, initiates the establishment of cell polarity through the recruitment of the centrosomal proteins spd-2 and spd-5 during prophase (PubMed:17115027). During the development of the vulva, controls the onset of vulval cell terminal differentiation by controlling the duration of G1 phase (PubMed:10952902, PubMed:20005870). During hypoderm development at early larval stages, controls syncytial fate of seam cell daughter cells (PubMed:17476329). Involved in the progression of cell division in the intestinal lineage in larvae, and in particular in endoreplication, a specific growth pathway in the intestinal epithelium, required for feeding and gut development in growing larvae (PubMed:17466069). By controlling the activity of translational repressor gld-1, regulates the pool of germline stem cells and the size of the mitotic zone by preventing entry into meiosis (PubMed:21455289). In addition, repression of expression by gld-1 prevents mitosis re-entry in meiotic germline cells (PubMed:19758560).</text>
</comment>
<comment type="subunit">
    <text evidence="1">Interacts with a member of the CDK2/CDK protein kinases to form a serine/threonine kinase holoenzyme complex. The cyclin subunit imparts substrate specificity to the complex (By similarity).</text>
</comment>
<comment type="interaction">
    <interactant intactId="EBI-6499833">
        <id>O01501</id>
    </interactant>
    <interactant intactId="EBI-14063070">
        <id>O61847</id>
        <label>cdk-2</label>
    </interactant>
    <organismsDiffer>false</organismsDiffer>
    <experiments>3</experiments>
</comment>
<comment type="subcellular location">
    <subcellularLocation>
        <location evidence="4">Nucleus</location>
    </subcellularLocation>
    <subcellularLocation>
        <location evidence="5">Cytoplasm</location>
        <location evidence="5">Cytoskeleton</location>
        <location evidence="5">Microtubule organizing center</location>
        <location evidence="5">Centrosome</location>
        <location evidence="5">Centriole</location>
    </subcellularLocation>
    <text evidence="4 5">Co-localizes with cdk-2 in the sperm centrioles before the first embryonic mitosis and then to the male and female nuclei upon entry into mitosis.</text>
</comment>
<comment type="alternative products">
    <event type="alternative splicing"/>
    <isoform>
        <id>O01501-1</id>
        <name evidence="4">a</name>
        <sequence type="displayed"/>
    </isoform>
    <isoform>
        <id>O01501-2</id>
        <name evidence="4">b</name>
        <sequence type="described" ref="VSP_007909"/>
    </isoform>
</comment>
<comment type="tissue specificity">
    <text evidence="4">Expressed dynamically in proliferating cells throughout development. Detectable in larval blast cells undergoing active proliferation that give rise to all tissue types, including germline, intestine, hypodermis, neurons, and muscle.</text>
</comment>
<comment type="developmental stage">
    <text evidence="4 7 8 10 11">Expressed both maternally and zygotically. Ubiquitous embryonic pattern of expression declines during embryogenesis and disappears from most cells in comma-stage embryos coincident with the completion of the majority of embryonic cell divisions. Expression levels drop and become restricted and dynamic during postembryonic development (PubMed:12606285). During the development of distal tip cells, expressed asymmetrically between the daughters of the Z1.a and Z4.p cells; asymmetric expression is regulated by wrm-1, a component of the Wnt/MAPK pathway (PubMed:17476329). In the gonads, expression is restricted to the proliferating distal germline cells (PubMed:12606285, PubMed:21558371). In germline cells entering meiosis, expression is repressed by gld-1 (PubMed:19758560, PubMed:21455289).</text>
</comment>
<comment type="disruption phenotype">
    <text evidence="3 5 7 9 10">Loss of cell division in vulval lineages as a result of lengthened intervals between cell divisons (PubMed:20005870). RNAi-mediated knockdown results in arrest prior to the 100-cell embryonic stage (PubMed:10952902). Depending on the knockdown, some animals reach adult age (PubMed:17476329). In the 1-cell embryo, persistent ruffling throughout the embryo cortex and mislocalization of par-2, which remains cytoplasmic, and par-6, which is distributed throughout the cortex. In 50 percent of embryos, the first division is symmetric. Adult mutants are sterile due to a lack of sperm and egg production (PubMed:17115027). In mutants and knockdown animals, production of 2 additional distal tip cells (DTC) is often associated with the production of an extra gonad (PubMed:17476329). In addition, gonads of knockdown animals have an abnormal mitotic zone characterized by an enlargement of the distal germ cell nuclei, a reduction in the number of mitotic germ cells, a reduction in the mitotic region length and an abnormal expression of gld-1 (PubMed:21455289).</text>
</comment>
<comment type="similarity">
    <text evidence="13">Belongs to the cyclin family. Cyclin E subfamily.</text>
</comment>
<evidence type="ECO:0000250" key="1">
    <source>
        <dbReference type="UniProtKB" id="P24864"/>
    </source>
</evidence>
<evidence type="ECO:0000256" key="2">
    <source>
        <dbReference type="SAM" id="MobiDB-lite"/>
    </source>
</evidence>
<evidence type="ECO:0000269" key="3">
    <source>
    </source>
</evidence>
<evidence type="ECO:0000269" key="4">
    <source>
    </source>
</evidence>
<evidence type="ECO:0000269" key="5">
    <source>
    </source>
</evidence>
<evidence type="ECO:0000269" key="6">
    <source>
    </source>
</evidence>
<evidence type="ECO:0000269" key="7">
    <source>
    </source>
</evidence>
<evidence type="ECO:0000269" key="8">
    <source>
    </source>
</evidence>
<evidence type="ECO:0000269" key="9">
    <source>
    </source>
</evidence>
<evidence type="ECO:0000269" key="10">
    <source>
    </source>
</evidence>
<evidence type="ECO:0000269" key="11">
    <source>
    </source>
</evidence>
<evidence type="ECO:0000303" key="12">
    <source>
    </source>
</evidence>
<evidence type="ECO:0000305" key="13"/>
<evidence type="ECO:0000312" key="14">
    <source>
        <dbReference type="WormBase" id="C37A2.4a"/>
    </source>
</evidence>
<accession>O01501</accession>
<accession>O77098</accession>
<accession>Q86FL2</accession>
<dbReference type="EMBL" id="AF520616">
    <property type="protein sequence ID" value="AAM78547.1"/>
    <property type="molecule type" value="mRNA"/>
</dbReference>
<dbReference type="EMBL" id="AF058331">
    <property type="protein sequence ID" value="AAC63505.1"/>
    <property type="molecule type" value="mRNA"/>
</dbReference>
<dbReference type="EMBL" id="FO080805">
    <property type="protein sequence ID" value="CCD66921.1"/>
    <property type="molecule type" value="Genomic_DNA"/>
</dbReference>
<dbReference type="EMBL" id="FO080805">
    <property type="protein sequence ID" value="CCD66922.1"/>
    <property type="molecule type" value="Genomic_DNA"/>
</dbReference>
<dbReference type="PIR" id="T43050">
    <property type="entry name" value="T43050"/>
</dbReference>
<dbReference type="RefSeq" id="NP_001021027.1">
    <molecule id="O01501-1"/>
    <property type="nucleotide sequence ID" value="NM_001025856.4"/>
</dbReference>
<dbReference type="RefSeq" id="NP_001021028.1">
    <molecule id="O01501-2"/>
    <property type="nucleotide sequence ID" value="NM_001025857.4"/>
</dbReference>
<dbReference type="SMR" id="O01501"/>
<dbReference type="BioGRID" id="37847">
    <property type="interactions" value="22"/>
</dbReference>
<dbReference type="ComplexPortal" id="CPX-1127">
    <property type="entry name" value="Cyclin cye-1-cdk2 complex"/>
</dbReference>
<dbReference type="FunCoup" id="O01501">
    <property type="interactions" value="1708"/>
</dbReference>
<dbReference type="IntAct" id="O01501">
    <property type="interactions" value="7"/>
</dbReference>
<dbReference type="STRING" id="6239.C37A2.4a.1"/>
<dbReference type="PaxDb" id="6239-C37A2.4a"/>
<dbReference type="PeptideAtlas" id="O01501"/>
<dbReference type="EnsemblMetazoa" id="C37A2.4a.1">
    <molecule id="O01501-1"/>
    <property type="protein sequence ID" value="C37A2.4a.1"/>
    <property type="gene ID" value="WBGene00000871"/>
</dbReference>
<dbReference type="EnsemblMetazoa" id="C37A2.4b.1">
    <molecule id="O01501-2"/>
    <property type="protein sequence ID" value="C37A2.4b.1"/>
    <property type="gene ID" value="WBGene00000871"/>
</dbReference>
<dbReference type="GeneID" id="172399"/>
<dbReference type="KEGG" id="cel:CELE_C37A2.4"/>
<dbReference type="UCSC" id="C37A2.4a">
    <molecule id="O01501-1"/>
    <property type="organism name" value="c. elegans"/>
</dbReference>
<dbReference type="AGR" id="WB:WBGene00000871"/>
<dbReference type="CTD" id="172399"/>
<dbReference type="WormBase" id="C37A2.4a">
    <molecule id="O01501-1"/>
    <property type="protein sequence ID" value="CE24832"/>
    <property type="gene ID" value="WBGene00000871"/>
    <property type="gene designation" value="cye-1"/>
</dbReference>
<dbReference type="WormBase" id="C37A2.4b">
    <molecule id="O01501-2"/>
    <property type="protein sequence ID" value="CE33761"/>
    <property type="gene ID" value="WBGene00000871"/>
    <property type="gene designation" value="cye-1"/>
</dbReference>
<dbReference type="eggNOG" id="KOG0655">
    <property type="taxonomic scope" value="Eukaryota"/>
</dbReference>
<dbReference type="GeneTree" id="ENSGT00940000169122"/>
<dbReference type="InParanoid" id="O01501"/>
<dbReference type="OMA" id="CESEKLH"/>
<dbReference type="OrthoDB" id="5590282at2759"/>
<dbReference type="PhylomeDB" id="O01501"/>
<dbReference type="Reactome" id="R-CEL-1538133">
    <property type="pathway name" value="G0 and Early G1"/>
</dbReference>
<dbReference type="Reactome" id="R-CEL-187577">
    <property type="pathway name" value="SCF(Skp2)-mediated degradation of p27/p21"/>
</dbReference>
<dbReference type="Reactome" id="R-CEL-2559586">
    <property type="pathway name" value="DNA Damage/Telomere Stress Induced Senescence"/>
</dbReference>
<dbReference type="Reactome" id="R-CEL-6804116">
    <property type="pathway name" value="TP53 Regulates Transcription of Genes Involved in G1 Cell Cycle Arrest"/>
</dbReference>
<dbReference type="Reactome" id="R-CEL-69017">
    <property type="pathway name" value="CDK-mediated phosphorylation and removal of Cdc6"/>
</dbReference>
<dbReference type="Reactome" id="R-CEL-69202">
    <property type="pathway name" value="Cyclin E associated events during G1/S transition"/>
</dbReference>
<dbReference type="Reactome" id="R-CEL-69563">
    <property type="pathway name" value="p53-Dependent G1 DNA Damage Response"/>
</dbReference>
<dbReference type="Reactome" id="R-CEL-9706019">
    <property type="pathway name" value="RHOBTB3 ATPase cycle"/>
</dbReference>
<dbReference type="PRO" id="PR:O01501"/>
<dbReference type="Proteomes" id="UP000001940">
    <property type="component" value="Chromosome I"/>
</dbReference>
<dbReference type="Bgee" id="WBGene00000871">
    <property type="expression patterns" value="Expressed in adult organism and 4 other cell types or tissues"/>
</dbReference>
<dbReference type="GO" id="GO:0005814">
    <property type="term" value="C:centriole"/>
    <property type="evidence" value="ECO:0007669"/>
    <property type="project" value="UniProtKB-SubCell"/>
</dbReference>
<dbReference type="GO" id="GO:0000785">
    <property type="term" value="C:chromatin"/>
    <property type="evidence" value="ECO:0000314"/>
    <property type="project" value="UniProtKB"/>
</dbReference>
<dbReference type="GO" id="GO:0097134">
    <property type="term" value="C:cyclin E1-CDK2 complex"/>
    <property type="evidence" value="ECO:0000353"/>
    <property type="project" value="ComplexPortal"/>
</dbReference>
<dbReference type="GO" id="GO:0000307">
    <property type="term" value="C:cyclin-dependent protein kinase holoenzyme complex"/>
    <property type="evidence" value="ECO:0000250"/>
    <property type="project" value="WormBase"/>
</dbReference>
<dbReference type="GO" id="GO:0005737">
    <property type="term" value="C:cytoplasm"/>
    <property type="evidence" value="ECO:0000318"/>
    <property type="project" value="GO_Central"/>
</dbReference>
<dbReference type="GO" id="GO:0005815">
    <property type="term" value="C:microtubule organizing center"/>
    <property type="evidence" value="ECO:0000318"/>
    <property type="project" value="GO_Central"/>
</dbReference>
<dbReference type="GO" id="GO:0005634">
    <property type="term" value="C:nucleus"/>
    <property type="evidence" value="ECO:0000314"/>
    <property type="project" value="UniProtKB"/>
</dbReference>
<dbReference type="GO" id="GO:0016538">
    <property type="term" value="F:cyclin-dependent protein serine/threonine kinase regulator activity"/>
    <property type="evidence" value="ECO:0000314"/>
    <property type="project" value="UniProtKB"/>
</dbReference>
<dbReference type="GO" id="GO:0051301">
    <property type="term" value="P:cell division"/>
    <property type="evidence" value="ECO:0007669"/>
    <property type="project" value="UniProtKB-KW"/>
</dbReference>
<dbReference type="GO" id="GO:0042023">
    <property type="term" value="P:DNA endoreduplication"/>
    <property type="evidence" value="ECO:0000315"/>
    <property type="project" value="WormBase"/>
</dbReference>
<dbReference type="GO" id="GO:0009792">
    <property type="term" value="P:embryo development ending in birth or egg hatching"/>
    <property type="evidence" value="ECO:0000315"/>
    <property type="project" value="WormBase"/>
</dbReference>
<dbReference type="GO" id="GO:0000082">
    <property type="term" value="P:G1/S transition of mitotic cell cycle"/>
    <property type="evidence" value="ECO:0000314"/>
    <property type="project" value="UniProtKB"/>
</dbReference>
<dbReference type="GO" id="GO:0007281">
    <property type="term" value="P:germ cell development"/>
    <property type="evidence" value="ECO:0000315"/>
    <property type="project" value="WormBase"/>
</dbReference>
<dbReference type="GO" id="GO:0051729">
    <property type="term" value="P:germline cell cycle switching, mitotic to meiotic cell cycle"/>
    <property type="evidence" value="ECO:0000315"/>
    <property type="project" value="WormBase"/>
</dbReference>
<dbReference type="GO" id="GO:0008406">
    <property type="term" value="P:gonad development"/>
    <property type="evidence" value="ECO:0000316"/>
    <property type="project" value="UniProtKB"/>
</dbReference>
<dbReference type="GO" id="GO:0051321">
    <property type="term" value="P:meiotic cell cycle"/>
    <property type="evidence" value="ECO:0007669"/>
    <property type="project" value="UniProtKB-KW"/>
</dbReference>
<dbReference type="GO" id="GO:0008284">
    <property type="term" value="P:positive regulation of cell population proliferation"/>
    <property type="evidence" value="ECO:0000315"/>
    <property type="project" value="WormBase"/>
</dbReference>
<dbReference type="GO" id="GO:1900087">
    <property type="term" value="P:positive regulation of G1/S transition of mitotic cell cycle"/>
    <property type="evidence" value="ECO:0000315"/>
    <property type="project" value="UniProtKB"/>
</dbReference>
<dbReference type="GO" id="GO:0045931">
    <property type="term" value="P:positive regulation of mitotic cell cycle"/>
    <property type="evidence" value="ECO:0000316"/>
    <property type="project" value="WormBase"/>
</dbReference>
<dbReference type="GO" id="GO:1904781">
    <property type="term" value="P:positive regulation of protein localization to centrosome"/>
    <property type="evidence" value="ECO:0000316"/>
    <property type="project" value="UniProtKB"/>
</dbReference>
<dbReference type="GO" id="GO:0040026">
    <property type="term" value="P:positive regulation of vulval development"/>
    <property type="evidence" value="ECO:0000315"/>
    <property type="project" value="WormBase"/>
</dbReference>
<dbReference type="GO" id="GO:0009791">
    <property type="term" value="P:post-embryonic development"/>
    <property type="evidence" value="ECO:0000315"/>
    <property type="project" value="WormBase"/>
</dbReference>
<dbReference type="GO" id="GO:0010608">
    <property type="term" value="P:post-transcriptional regulation of gene expression"/>
    <property type="evidence" value="ECO:0000315"/>
    <property type="project" value="WormBase"/>
</dbReference>
<dbReference type="GO" id="GO:0051445">
    <property type="term" value="P:regulation of meiotic cell cycle"/>
    <property type="evidence" value="ECO:0000315"/>
    <property type="project" value="UniProtKB"/>
</dbReference>
<dbReference type="GO" id="GO:0007088">
    <property type="term" value="P:regulation of mitotic nuclear division"/>
    <property type="evidence" value="ECO:0000314"/>
    <property type="project" value="UniProtKB"/>
</dbReference>
<dbReference type="GO" id="GO:1904776">
    <property type="term" value="P:regulation of protein localization to cell cortex"/>
    <property type="evidence" value="ECO:0000315"/>
    <property type="project" value="UniProtKB"/>
</dbReference>
<dbReference type="CDD" id="cd20519">
    <property type="entry name" value="CYCLIN_CCNE_rpt1"/>
    <property type="match status" value="1"/>
</dbReference>
<dbReference type="CDD" id="cd20520">
    <property type="entry name" value="CYCLIN_CCNE_rpt2"/>
    <property type="match status" value="1"/>
</dbReference>
<dbReference type="FunFam" id="1.10.472.10:FF:000001">
    <property type="entry name" value="G2/mitotic-specific cyclin"/>
    <property type="match status" value="1"/>
</dbReference>
<dbReference type="Gene3D" id="1.10.472.10">
    <property type="entry name" value="Cyclin-like"/>
    <property type="match status" value="2"/>
</dbReference>
<dbReference type="InterPro" id="IPR039361">
    <property type="entry name" value="Cyclin"/>
</dbReference>
<dbReference type="InterPro" id="IPR013763">
    <property type="entry name" value="Cyclin-like_dom"/>
</dbReference>
<dbReference type="InterPro" id="IPR036915">
    <property type="entry name" value="Cyclin-like_sf"/>
</dbReference>
<dbReference type="InterPro" id="IPR006671">
    <property type="entry name" value="Cyclin_N"/>
</dbReference>
<dbReference type="InterPro" id="IPR048258">
    <property type="entry name" value="Cyclins_cyclin-box"/>
</dbReference>
<dbReference type="PANTHER" id="PTHR10177">
    <property type="entry name" value="CYCLINS"/>
    <property type="match status" value="1"/>
</dbReference>
<dbReference type="Pfam" id="PF00134">
    <property type="entry name" value="Cyclin_N"/>
    <property type="match status" value="1"/>
</dbReference>
<dbReference type="SMART" id="SM00385">
    <property type="entry name" value="CYCLIN"/>
    <property type="match status" value="1"/>
</dbReference>
<dbReference type="SUPFAM" id="SSF47954">
    <property type="entry name" value="Cyclin-like"/>
    <property type="match status" value="2"/>
</dbReference>
<dbReference type="PROSITE" id="PS00292">
    <property type="entry name" value="CYCLINS"/>
    <property type="match status" value="1"/>
</dbReference>
<name>CCNE_CAEEL</name>
<keyword id="KW-0025">Alternative splicing</keyword>
<keyword id="KW-0131">Cell cycle</keyword>
<keyword id="KW-0132">Cell division</keyword>
<keyword id="KW-0195">Cyclin</keyword>
<keyword id="KW-0963">Cytoplasm</keyword>
<keyword id="KW-0206">Cytoskeleton</keyword>
<keyword id="KW-0469">Meiosis</keyword>
<keyword id="KW-0498">Mitosis</keyword>
<keyword id="KW-0539">Nucleus</keyword>
<keyword id="KW-1185">Reference proteome</keyword>
<reference evidence="13" key="1">
    <citation type="journal article" date="2003" name="Dev. Biol.">
        <title>Cyclin E expression during development in Caenorhabditis elegans.</title>
        <authorList>
            <person name="Brodigan T.M."/>
            <person name="Liu J."/>
            <person name="Park M."/>
            <person name="Kipreos E.T."/>
            <person name="Krause M."/>
        </authorList>
    </citation>
    <scope>NUCLEOTIDE SEQUENCE [MRNA] (ISOFORMS A AND B)</scope>
    <scope>FUNCTION</scope>
    <scope>SUBCELLULAR LOCATION</scope>
    <scope>TISSUE SPECIFICITY</scope>
    <scope>DEVELOPMENTAL STAGE</scope>
</reference>
<reference key="2">
    <citation type="journal article" date="1998" name="Science">
        <title>Genome sequence of the nematode C. elegans: a platform for investigating biology.</title>
        <authorList>
            <consortium name="The C. elegans sequencing consortium"/>
        </authorList>
    </citation>
    <scope>NUCLEOTIDE SEQUENCE [LARGE SCALE GENOMIC DNA]</scope>
    <scope>ALTERNATIVE SPLICING</scope>
    <source>
        <strain>Bristol N2</strain>
    </source>
</reference>
<reference key="3">
    <citation type="journal article" date="2000" name="Development">
        <title>Mutations in cye-1, a Caenorhabditis elegans cyclin E homolog, reveal coordination between cell-cycle control and vulval development.</title>
        <authorList>
            <person name="Fay D.S."/>
            <person name="Han M."/>
        </authorList>
    </citation>
    <scope>FUNCTION</scope>
    <scope>DISRUPTION PHENOTYPE</scope>
</reference>
<reference key="4">
    <citation type="journal article" date="2006" name="Nat. Cell Biol.">
        <title>Cyclin E-Cdk2 temporally regulates centrosome assembly and establishment of polarity in Caenorhabditis elegans embryos.</title>
        <authorList>
            <person name="Cowan C.R."/>
            <person name="Hyman A.A."/>
        </authorList>
    </citation>
    <scope>FUNCTION</scope>
    <scope>SUBCELLULAR LOCATION</scope>
    <scope>DISRUPTION PHENOTYPE</scope>
</reference>
<reference key="5">
    <citation type="journal article" date="2007" name="BMC Dev. Biol.">
        <title>The lin-35/Rb and RNAi pathways cooperate to regulate a key cell cycle transition in C. elegans.</title>
        <authorList>
            <person name="Ouellet J."/>
            <person name="Roy R."/>
        </authorList>
    </citation>
    <scope>FUNCTION</scope>
</reference>
<reference key="6">
    <citation type="journal article" date="2007" name="PLoS ONE">
        <title>Cyclin E and CDK2 repress the terminal differentiation of quiescent cells after asymmetric division in C. elegans.</title>
        <authorList>
            <person name="Fujita M."/>
            <person name="Takeshita H."/>
            <person name="Sawa H."/>
        </authorList>
    </citation>
    <scope>FUNCTION</scope>
    <scope>DEVELOPMENTAL STAGE</scope>
    <scope>DISRUPTION PHENOTYPE</scope>
</reference>
<reference key="7">
    <citation type="journal article" date="2009" name="Dev. Cell">
        <title>Translational repression of cyclin E prevents precocious mitosis and embryonic gene activation during C. elegans meiosis.</title>
        <authorList>
            <person name="Biedermann B."/>
            <person name="Wright J."/>
            <person name="Senften M."/>
            <person name="Kalchhauser I."/>
            <person name="Sarathy G."/>
            <person name="Lee M.H."/>
            <person name="Ciosk R."/>
        </authorList>
    </citation>
    <scope>FUNCTION</scope>
    <scope>DEVELOPMENTAL STAGE</scope>
</reference>
<reference key="8">
    <citation type="journal article" date="2010" name="Dev. Biol.">
        <title>C. elegans BED domain transcription factor BED-3 controls lineage-specific cell proliferation during organogenesis.</title>
        <authorList>
            <person name="Inoue T."/>
            <person name="Sternberg P.W."/>
        </authorList>
    </citation>
    <scope>FUNCTION</scope>
    <scope>DISRUPTION PHENOTYPE</scope>
</reference>
<reference key="9">
    <citation type="journal article" date="2011" name="Development">
        <title>Cyclin E and CDK-2 regulate proliferative cell fate and cell cycle progression in the C. elegans germline.</title>
        <authorList>
            <person name="Fox P.M."/>
            <person name="Vought V.E."/>
            <person name="Hanazawa M."/>
            <person name="Lee M.H."/>
            <person name="Maine E.M."/>
            <person name="Schedl T."/>
        </authorList>
    </citation>
    <scope>FUNCTION</scope>
    <scope>DEVELOPMENTAL STAGE</scope>
</reference>
<reference key="10">
    <citation type="journal article" date="2011" name="PLoS Genet.">
        <title>Cyclin E and Cdk2 control GLD-1, the mitosis/meiosis decision, and germline stem cells in Caenorhabditis elegans.</title>
        <authorList>
            <person name="Jeong J."/>
            <person name="Verheyden J.M."/>
            <person name="Kimble J."/>
        </authorList>
    </citation>
    <scope>FUNCTION</scope>
    <scope>DEVELOPMENTAL STAGE</scope>
    <scope>DISRUPTION PHENOTYPE</scope>
</reference>
<gene>
    <name evidence="14" type="primary">cye-1</name>
    <name evidence="14" type="ORF">C37A2.4</name>
</gene>
<protein>
    <recommendedName>
        <fullName>G1/S-specific cyclin-E</fullName>
    </recommendedName>
</protein>
<feature type="chain" id="PRO_0000080458" description="G1/S-specific cyclin-E">
    <location>
        <begin position="1"/>
        <end position="524"/>
    </location>
</feature>
<feature type="region of interest" description="Disordered" evidence="2">
    <location>
        <begin position="1"/>
        <end position="155"/>
    </location>
</feature>
<feature type="compositionally biased region" description="Basic and acidic residues" evidence="2">
    <location>
        <begin position="18"/>
        <end position="47"/>
    </location>
</feature>
<feature type="compositionally biased region" description="Polar residues" evidence="2">
    <location>
        <begin position="48"/>
        <end position="62"/>
    </location>
</feature>
<feature type="compositionally biased region" description="Basic and acidic residues" evidence="2">
    <location>
        <begin position="63"/>
        <end position="78"/>
    </location>
</feature>
<feature type="compositionally biased region" description="Basic and acidic residues" evidence="2">
    <location>
        <begin position="86"/>
        <end position="95"/>
    </location>
</feature>
<feature type="compositionally biased region" description="Basic and acidic residues" evidence="2">
    <location>
        <begin position="146"/>
        <end position="155"/>
    </location>
</feature>
<feature type="splice variant" id="VSP_007909" description="In isoform b." evidence="12">
    <location>
        <begin position="100"/>
        <end position="102"/>
    </location>
</feature>
<organism>
    <name type="scientific">Caenorhabditis elegans</name>
    <dbReference type="NCBI Taxonomy" id="6239"/>
    <lineage>
        <taxon>Eukaryota</taxon>
        <taxon>Metazoa</taxon>
        <taxon>Ecdysozoa</taxon>
        <taxon>Nematoda</taxon>
        <taxon>Chromadorea</taxon>
        <taxon>Rhabditida</taxon>
        <taxon>Rhabditina</taxon>
        <taxon>Rhabditomorpha</taxon>
        <taxon>Rhabditoidea</taxon>
        <taxon>Rhabditidae</taxon>
        <taxon>Peloderinae</taxon>
        <taxon>Caenorhabditis</taxon>
    </lineage>
</organism>
<sequence>MAGRKSSRTAERVPTTQKPERKSAILSPHDELRERLLETAIDMKENIPQRNTRNSSVGSQKSDCSETRKRRSTKEGPAAKRHSGEKHRNGSREDSLEYISEYSDDREVGSSSSQSSRTRGQPLPAMPEEEEVFDKSSSSDNLAESEESHEMVRLEERQDIEEEIEDDFDDEEEDVVNDKEEYEEIESEDEDDYPVQNEGFAVTKRLMNDEHMVTAPTFLSTAKCDGIGSPTKVWSLMVKRDEIPRATRFLLGNHPDMDDEKRRILIDWMMEVCESEKLHRETFHLAVDYVDRYLESSNVECSTDNFQLVGTAALFIAAKYEEIYPPKCIDFAHLTDSAFTCDNIRTMEVLIVKYIGWSLGPITSIQWLSTYLQLLGTGKKNKSDHYEEQNMYVPELLRSEYLEMCKILDFLLFEIDSFTFSYRTIAAAVLFVNYEPTCAVEKATGFMQAQLEKVIEYVEPVCRAFAKQRQLLDDVIPKHESIKSDDSHNIQVYVKRSSMEPIVKSERERIQHLKARRLHPQRLF</sequence>